<accession>A5D5K1</accession>
<gene>
    <name evidence="1" type="primary">rpmG</name>
    <name type="ordered locus">PTH_0303</name>
</gene>
<feature type="chain" id="PRO_0000356606" description="Large ribosomal subunit protein bL33">
    <location>
        <begin position="1"/>
        <end position="49"/>
    </location>
</feature>
<dbReference type="EMBL" id="AP009389">
    <property type="protein sequence ID" value="BAF58484.1"/>
    <property type="status" value="ALT_INIT"/>
    <property type="molecule type" value="Genomic_DNA"/>
</dbReference>
<dbReference type="SMR" id="A5D5K1"/>
<dbReference type="STRING" id="370438.PTH_0303"/>
<dbReference type="KEGG" id="pth:PTH_0303"/>
<dbReference type="eggNOG" id="COG0267">
    <property type="taxonomic scope" value="Bacteria"/>
</dbReference>
<dbReference type="HOGENOM" id="CLU_190949_0_2_9"/>
<dbReference type="Proteomes" id="UP000006556">
    <property type="component" value="Chromosome"/>
</dbReference>
<dbReference type="GO" id="GO:0005737">
    <property type="term" value="C:cytoplasm"/>
    <property type="evidence" value="ECO:0007669"/>
    <property type="project" value="UniProtKB-ARBA"/>
</dbReference>
<dbReference type="GO" id="GO:1990904">
    <property type="term" value="C:ribonucleoprotein complex"/>
    <property type="evidence" value="ECO:0007669"/>
    <property type="project" value="UniProtKB-KW"/>
</dbReference>
<dbReference type="GO" id="GO:0005840">
    <property type="term" value="C:ribosome"/>
    <property type="evidence" value="ECO:0007669"/>
    <property type="project" value="UniProtKB-KW"/>
</dbReference>
<dbReference type="GO" id="GO:0003735">
    <property type="term" value="F:structural constituent of ribosome"/>
    <property type="evidence" value="ECO:0007669"/>
    <property type="project" value="InterPro"/>
</dbReference>
<dbReference type="GO" id="GO:0006412">
    <property type="term" value="P:translation"/>
    <property type="evidence" value="ECO:0007669"/>
    <property type="project" value="UniProtKB-UniRule"/>
</dbReference>
<dbReference type="Gene3D" id="2.20.28.120">
    <property type="entry name" value="Ribosomal protein L33"/>
    <property type="match status" value="1"/>
</dbReference>
<dbReference type="HAMAP" id="MF_00294">
    <property type="entry name" value="Ribosomal_bL33"/>
    <property type="match status" value="1"/>
</dbReference>
<dbReference type="InterPro" id="IPR001705">
    <property type="entry name" value="Ribosomal_bL33"/>
</dbReference>
<dbReference type="InterPro" id="IPR018264">
    <property type="entry name" value="Ribosomal_bL33_CS"/>
</dbReference>
<dbReference type="InterPro" id="IPR038584">
    <property type="entry name" value="Ribosomal_bL33_sf"/>
</dbReference>
<dbReference type="InterPro" id="IPR011332">
    <property type="entry name" value="Ribosomal_zn-bd"/>
</dbReference>
<dbReference type="NCBIfam" id="NF001764">
    <property type="entry name" value="PRK00504.1"/>
    <property type="match status" value="1"/>
</dbReference>
<dbReference type="NCBIfam" id="NF001860">
    <property type="entry name" value="PRK00595.1"/>
    <property type="match status" value="1"/>
</dbReference>
<dbReference type="NCBIfam" id="TIGR01023">
    <property type="entry name" value="rpmG_bact"/>
    <property type="match status" value="1"/>
</dbReference>
<dbReference type="PANTHER" id="PTHR43168">
    <property type="entry name" value="50S RIBOSOMAL PROTEIN L33, CHLOROPLASTIC"/>
    <property type="match status" value="1"/>
</dbReference>
<dbReference type="PANTHER" id="PTHR43168:SF2">
    <property type="entry name" value="LARGE RIBOSOMAL SUBUNIT PROTEIN BL33C"/>
    <property type="match status" value="1"/>
</dbReference>
<dbReference type="Pfam" id="PF00471">
    <property type="entry name" value="Ribosomal_L33"/>
    <property type="match status" value="1"/>
</dbReference>
<dbReference type="SUPFAM" id="SSF57829">
    <property type="entry name" value="Zn-binding ribosomal proteins"/>
    <property type="match status" value="1"/>
</dbReference>
<dbReference type="PROSITE" id="PS00582">
    <property type="entry name" value="RIBOSOMAL_L33"/>
    <property type="match status" value="1"/>
</dbReference>
<evidence type="ECO:0000255" key="1">
    <source>
        <dbReference type="HAMAP-Rule" id="MF_00294"/>
    </source>
</evidence>
<evidence type="ECO:0000305" key="2"/>
<reference key="1">
    <citation type="journal article" date="2008" name="Genome Res.">
        <title>The genome of Pelotomaculum thermopropionicum reveals niche-associated evolution in anaerobic microbiota.</title>
        <authorList>
            <person name="Kosaka T."/>
            <person name="Kato S."/>
            <person name="Shimoyama T."/>
            <person name="Ishii S."/>
            <person name="Abe T."/>
            <person name="Watanabe K."/>
        </authorList>
    </citation>
    <scope>NUCLEOTIDE SEQUENCE [LARGE SCALE GENOMIC DNA]</scope>
    <source>
        <strain>DSM 13744 / JCM 10971 / SI</strain>
    </source>
</reference>
<proteinExistence type="inferred from homology"/>
<organism>
    <name type="scientific">Pelotomaculum thermopropionicum (strain DSM 13744 / JCM 10971 / SI)</name>
    <dbReference type="NCBI Taxonomy" id="370438"/>
    <lineage>
        <taxon>Bacteria</taxon>
        <taxon>Bacillati</taxon>
        <taxon>Bacillota</taxon>
        <taxon>Clostridia</taxon>
        <taxon>Eubacteriales</taxon>
        <taxon>Desulfotomaculaceae</taxon>
        <taxon>Pelotomaculum</taxon>
    </lineage>
</organism>
<sequence length="49" mass="5934">MRVGVTLACTECKRRNYTTTKNKKNDPNRIEMKKYCRFCQTHTLHKETR</sequence>
<keyword id="KW-1185">Reference proteome</keyword>
<keyword id="KW-0687">Ribonucleoprotein</keyword>
<keyword id="KW-0689">Ribosomal protein</keyword>
<name>RL33_PELTS</name>
<comment type="similarity">
    <text evidence="1">Belongs to the bacterial ribosomal protein bL33 family.</text>
</comment>
<comment type="sequence caution" evidence="2">
    <conflict type="erroneous initiation">
        <sequence resource="EMBL-CDS" id="BAF58484"/>
    </conflict>
</comment>
<protein>
    <recommendedName>
        <fullName evidence="1">Large ribosomal subunit protein bL33</fullName>
    </recommendedName>
    <alternativeName>
        <fullName evidence="2">50S ribosomal protein L33</fullName>
    </alternativeName>
</protein>